<accession>Q1GBL1</accession>
<sequence length="147" mass="16323">MPLVPKRVKHRREFRGKMRGAAKGGKTVAFGEYGLEALESHWITNRQIEAARVAMTRYMKRGGKVWIRIFPQKSYTAKGVGVRMGSGKGAPAGWVAVVKREKIMFEIGGVSEETAREAMRLAASKLPIKCKFVKREDQEAGGATNED</sequence>
<reference key="1">
    <citation type="journal article" date="2006" name="Proc. Natl. Acad. Sci. U.S.A.">
        <title>The complete genome sequence of Lactobacillus bulgaricus reveals extensive and ongoing reductive evolution.</title>
        <authorList>
            <person name="van de Guchte M."/>
            <person name="Penaud S."/>
            <person name="Grimaldi C."/>
            <person name="Barbe V."/>
            <person name="Bryson K."/>
            <person name="Nicolas P."/>
            <person name="Robert C."/>
            <person name="Oztas S."/>
            <person name="Mangenot S."/>
            <person name="Couloux A."/>
            <person name="Loux V."/>
            <person name="Dervyn R."/>
            <person name="Bossy R."/>
            <person name="Bolotin A."/>
            <person name="Batto J.-M."/>
            <person name="Walunas T."/>
            <person name="Gibrat J.-F."/>
            <person name="Bessieres P."/>
            <person name="Weissenbach J."/>
            <person name="Ehrlich S.D."/>
            <person name="Maguin E."/>
        </authorList>
    </citation>
    <scope>NUCLEOTIDE SEQUENCE [LARGE SCALE GENOMIC DNA]</scope>
    <source>
        <strain>ATCC 11842 / DSM 20081 / BCRC 10696 / JCM 1002 / NBRC 13953 / NCIMB 11778 / NCTC 12712 / WDCM 00102 / Lb 14</strain>
    </source>
</reference>
<protein>
    <recommendedName>
        <fullName evidence="1">Large ribosomal subunit protein uL16</fullName>
    </recommendedName>
    <alternativeName>
        <fullName evidence="2">50S ribosomal protein L16</fullName>
    </alternativeName>
</protein>
<dbReference type="EMBL" id="CR954253">
    <property type="protein sequence ID" value="CAI97238.1"/>
    <property type="molecule type" value="Genomic_DNA"/>
</dbReference>
<dbReference type="RefSeq" id="WP_002878205.1">
    <property type="nucleotide sequence ID" value="NZ_JQAV01000001.1"/>
</dbReference>
<dbReference type="SMR" id="Q1GBL1"/>
<dbReference type="STRING" id="390333.Ldb0403"/>
<dbReference type="GeneID" id="69668433"/>
<dbReference type="KEGG" id="ldb:Ldb0403"/>
<dbReference type="eggNOG" id="COG0197">
    <property type="taxonomic scope" value="Bacteria"/>
</dbReference>
<dbReference type="HOGENOM" id="CLU_078858_2_1_9"/>
<dbReference type="BioCyc" id="LDEL390333:LDB_RS01710-MONOMER"/>
<dbReference type="Proteomes" id="UP000001259">
    <property type="component" value="Chromosome"/>
</dbReference>
<dbReference type="GO" id="GO:0022625">
    <property type="term" value="C:cytosolic large ribosomal subunit"/>
    <property type="evidence" value="ECO:0007669"/>
    <property type="project" value="TreeGrafter"/>
</dbReference>
<dbReference type="GO" id="GO:0019843">
    <property type="term" value="F:rRNA binding"/>
    <property type="evidence" value="ECO:0007669"/>
    <property type="project" value="UniProtKB-UniRule"/>
</dbReference>
<dbReference type="GO" id="GO:0003735">
    <property type="term" value="F:structural constituent of ribosome"/>
    <property type="evidence" value="ECO:0007669"/>
    <property type="project" value="InterPro"/>
</dbReference>
<dbReference type="GO" id="GO:0000049">
    <property type="term" value="F:tRNA binding"/>
    <property type="evidence" value="ECO:0007669"/>
    <property type="project" value="UniProtKB-KW"/>
</dbReference>
<dbReference type="GO" id="GO:0006412">
    <property type="term" value="P:translation"/>
    <property type="evidence" value="ECO:0007669"/>
    <property type="project" value="UniProtKB-UniRule"/>
</dbReference>
<dbReference type="CDD" id="cd01433">
    <property type="entry name" value="Ribosomal_L16_L10e"/>
    <property type="match status" value="1"/>
</dbReference>
<dbReference type="FunFam" id="3.90.1170.10:FF:000001">
    <property type="entry name" value="50S ribosomal protein L16"/>
    <property type="match status" value="1"/>
</dbReference>
<dbReference type="Gene3D" id="3.90.1170.10">
    <property type="entry name" value="Ribosomal protein L10e/L16"/>
    <property type="match status" value="1"/>
</dbReference>
<dbReference type="HAMAP" id="MF_01342">
    <property type="entry name" value="Ribosomal_uL16"/>
    <property type="match status" value="1"/>
</dbReference>
<dbReference type="InterPro" id="IPR047873">
    <property type="entry name" value="Ribosomal_uL16"/>
</dbReference>
<dbReference type="InterPro" id="IPR000114">
    <property type="entry name" value="Ribosomal_uL16_bact-type"/>
</dbReference>
<dbReference type="InterPro" id="IPR020798">
    <property type="entry name" value="Ribosomal_uL16_CS"/>
</dbReference>
<dbReference type="InterPro" id="IPR016180">
    <property type="entry name" value="Ribosomal_uL16_dom"/>
</dbReference>
<dbReference type="InterPro" id="IPR036920">
    <property type="entry name" value="Ribosomal_uL16_sf"/>
</dbReference>
<dbReference type="NCBIfam" id="TIGR01164">
    <property type="entry name" value="rplP_bact"/>
    <property type="match status" value="1"/>
</dbReference>
<dbReference type="PANTHER" id="PTHR12220">
    <property type="entry name" value="50S/60S RIBOSOMAL PROTEIN L16"/>
    <property type="match status" value="1"/>
</dbReference>
<dbReference type="PANTHER" id="PTHR12220:SF13">
    <property type="entry name" value="LARGE RIBOSOMAL SUBUNIT PROTEIN UL16M"/>
    <property type="match status" value="1"/>
</dbReference>
<dbReference type="Pfam" id="PF00252">
    <property type="entry name" value="Ribosomal_L16"/>
    <property type="match status" value="1"/>
</dbReference>
<dbReference type="PRINTS" id="PR00060">
    <property type="entry name" value="RIBOSOMALL16"/>
</dbReference>
<dbReference type="SUPFAM" id="SSF54686">
    <property type="entry name" value="Ribosomal protein L16p/L10e"/>
    <property type="match status" value="1"/>
</dbReference>
<dbReference type="PROSITE" id="PS00586">
    <property type="entry name" value="RIBOSOMAL_L16_1"/>
    <property type="match status" value="1"/>
</dbReference>
<dbReference type="PROSITE" id="PS00701">
    <property type="entry name" value="RIBOSOMAL_L16_2"/>
    <property type="match status" value="1"/>
</dbReference>
<gene>
    <name evidence="1" type="primary">rplP</name>
    <name type="ordered locus">Ldb0403</name>
</gene>
<evidence type="ECO:0000255" key="1">
    <source>
        <dbReference type="HAMAP-Rule" id="MF_01342"/>
    </source>
</evidence>
<evidence type="ECO:0000305" key="2"/>
<organism>
    <name type="scientific">Lactobacillus delbrueckii subsp. bulgaricus (strain ATCC 11842 / DSM 20081 / BCRC 10696 / JCM 1002 / NBRC 13953 / NCIMB 11778 / NCTC 12712 / WDCM 00102 / Lb 14)</name>
    <dbReference type="NCBI Taxonomy" id="390333"/>
    <lineage>
        <taxon>Bacteria</taxon>
        <taxon>Bacillati</taxon>
        <taxon>Bacillota</taxon>
        <taxon>Bacilli</taxon>
        <taxon>Lactobacillales</taxon>
        <taxon>Lactobacillaceae</taxon>
        <taxon>Lactobacillus</taxon>
    </lineage>
</organism>
<name>RL16_LACDA</name>
<keyword id="KW-1185">Reference proteome</keyword>
<keyword id="KW-0687">Ribonucleoprotein</keyword>
<keyword id="KW-0689">Ribosomal protein</keyword>
<keyword id="KW-0694">RNA-binding</keyword>
<keyword id="KW-0699">rRNA-binding</keyword>
<keyword id="KW-0820">tRNA-binding</keyword>
<proteinExistence type="inferred from homology"/>
<feature type="chain" id="PRO_0000251641" description="Large ribosomal subunit protein uL16">
    <location>
        <begin position="1"/>
        <end position="147"/>
    </location>
</feature>
<comment type="function">
    <text evidence="1">Binds 23S rRNA and is also seen to make contacts with the A and possibly P site tRNAs.</text>
</comment>
<comment type="subunit">
    <text evidence="1">Part of the 50S ribosomal subunit.</text>
</comment>
<comment type="similarity">
    <text evidence="1">Belongs to the universal ribosomal protein uL16 family.</text>
</comment>